<dbReference type="EC" id="2.3.1.-" evidence="4"/>
<dbReference type="EMBL" id="MH568692">
    <property type="protein sequence ID" value="AXN57020.1"/>
    <property type="molecule type" value="mRNA"/>
</dbReference>
<dbReference type="EMBL" id="CM009300">
    <property type="protein sequence ID" value="PNT13461.2"/>
    <property type="molecule type" value="Genomic_DNA"/>
</dbReference>
<dbReference type="RefSeq" id="XP_002317022.2">
    <property type="nucleotide sequence ID" value="XM_002316986.2"/>
</dbReference>
<dbReference type="SMR" id="A0A2K1YKA4"/>
<dbReference type="GlyCosmos" id="A0A2K1YKA4">
    <property type="glycosylation" value="4 sites, No reported glycans"/>
</dbReference>
<dbReference type="EnsemblPlants" id="Potri.011G144100.1.v4.1">
    <property type="protein sequence ID" value="Potri.011G144100.1.v4.1"/>
    <property type="gene ID" value="Potri.011G144100.v4.1"/>
</dbReference>
<dbReference type="GeneID" id="7454989"/>
<dbReference type="Gramene" id="Potri.011G144100.1.v4.1">
    <property type="protein sequence ID" value="Potri.011G144100.1.v4.1"/>
    <property type="gene ID" value="Potri.011G144100.v4.1"/>
</dbReference>
<dbReference type="KEGG" id="pop:7454989"/>
<dbReference type="InParanoid" id="A0A2K1YKA4"/>
<dbReference type="OMA" id="HINECQN"/>
<dbReference type="OrthoDB" id="630188at2759"/>
<dbReference type="Proteomes" id="UP000006729">
    <property type="component" value="Chromosome 11"/>
</dbReference>
<dbReference type="GO" id="GO:0005794">
    <property type="term" value="C:Golgi apparatus"/>
    <property type="evidence" value="ECO:0000318"/>
    <property type="project" value="GO_Central"/>
</dbReference>
<dbReference type="GO" id="GO:0000139">
    <property type="term" value="C:Golgi membrane"/>
    <property type="evidence" value="ECO:0007669"/>
    <property type="project" value="UniProtKB-SubCell"/>
</dbReference>
<dbReference type="GO" id="GO:0016413">
    <property type="term" value="F:O-acetyltransferase activity"/>
    <property type="evidence" value="ECO:0000318"/>
    <property type="project" value="GO_Central"/>
</dbReference>
<dbReference type="GO" id="GO:1990538">
    <property type="term" value="F:xylan O-acetyltransferase activity"/>
    <property type="evidence" value="ECO:0000314"/>
    <property type="project" value="UniProtKB"/>
</dbReference>
<dbReference type="GO" id="GO:1990937">
    <property type="term" value="P:xylan acetylation"/>
    <property type="evidence" value="ECO:0000314"/>
    <property type="project" value="UniProtKB"/>
</dbReference>
<dbReference type="InterPro" id="IPR029962">
    <property type="entry name" value="TBL"/>
</dbReference>
<dbReference type="InterPro" id="IPR026057">
    <property type="entry name" value="TBL_C"/>
</dbReference>
<dbReference type="InterPro" id="IPR025846">
    <property type="entry name" value="TBL_N"/>
</dbReference>
<dbReference type="PANTHER" id="PTHR32285">
    <property type="entry name" value="PROTEIN TRICHOME BIREFRINGENCE-LIKE 9-RELATED"/>
    <property type="match status" value="1"/>
</dbReference>
<dbReference type="PANTHER" id="PTHR32285:SF246">
    <property type="entry name" value="XYLOGLUCAN O-ACETYLTRANSFERASE 3"/>
    <property type="match status" value="1"/>
</dbReference>
<dbReference type="Pfam" id="PF13839">
    <property type="entry name" value="PC-Esterase"/>
    <property type="match status" value="1"/>
</dbReference>
<dbReference type="Pfam" id="PF14416">
    <property type="entry name" value="PMR5N"/>
    <property type="match status" value="1"/>
</dbReference>
<comment type="function">
    <text evidence="4">Xyloglucan acetyltransferase that catalyzes the acetylation of fucosylated Gal residues on xyloglucan side chains (PubMed:30083810). Predominantly catalyze 6-O-monoacetylation of Gal residues in the Fuc-Gal-Xyl trisaccharide side chains of xyloglucan oligomers (PubMed:30083810).</text>
</comment>
<comment type="biophysicochemical properties">
    <kinetics>
        <KM evidence="4">2.48 mM for xyloglucan oligomer</KM>
        <Vmax evidence="4">23.1 pmol/min/mg enzyme with xyloglucan oligomer as substrate</Vmax>
    </kinetics>
</comment>
<comment type="subcellular location">
    <subcellularLocation>
        <location evidence="6">Golgi apparatus membrane</location>
        <topology evidence="6">Single-pass type II membrane protein</topology>
    </subcellularLocation>
</comment>
<comment type="similarity">
    <text evidence="6">Belongs to the PC-esterase family. TBL subfamily.</text>
</comment>
<gene>
    <name evidence="5" type="primary">XGOAT3</name>
    <name evidence="8" type="ORF">POPTR_011G144100</name>
</gene>
<sequence>MNRFFYTVGLIFLFSFFILYSPKTSDLSNNVDLHQQLLISLQKEEERCDLFSGYWVQDLRGSQYTNVSCSSIPESKNCFMQGRPDAGFSQWRWKPDGCELPRFDPGTFFEIVRGKTMAFIGDSVARNHVESLLCLLSSEEMPLGIYKDTEDRTRTWYFPHSNFTLMVIWTRFLVLDEERVINGSVTGVFDLHLDKMDKNWANKLPEIDYAILSDAHWFFRKNYLYEKGKNIGCIFCGEPGIKSLDIDSALQMVIKVVLNYINNCKKCRNILTVLRTFSPAHFADGAWDTGGSCNRTHPLGEKEIDLASLDWKIRSIQVEEIKRVRPVARRRKKFEVLDVTKAMLMRPDGHPNSYWGNKWMKGYNDCVHWCMPGPIDAWNDFLIALLRRHAFTDFTWS</sequence>
<reference key="1">
    <citation type="journal article" date="2018" name="Planta">
        <title>Xyloglucan O-acetyltransferases from Arabidopsis thaliana and Populus trichocarpa catalyze acetylation of fucosylated galactose residues on xyloglucan side chains.</title>
        <authorList>
            <person name="Zhong R."/>
            <person name="Cui D."/>
            <person name="Ye Z.H."/>
        </authorList>
    </citation>
    <scope>NUCLEOTIDE SEQUENCE [MRNA]</scope>
    <scope>FUNCTION</scope>
    <scope>CATALYTIC ACTIVITY</scope>
    <scope>BIOPHYSICOCHEMICAL PROPERTIES</scope>
</reference>
<reference key="2">
    <citation type="journal article" date="2006" name="Science">
        <title>The genome of black cottonwood, Populus trichocarpa (Torr. &amp; Gray).</title>
        <authorList>
            <person name="Tuskan G.A."/>
            <person name="Difazio S."/>
            <person name="Jansson S."/>
            <person name="Bohlmann J."/>
            <person name="Grigoriev I."/>
            <person name="Hellsten U."/>
            <person name="Putnam N."/>
            <person name="Ralph S."/>
            <person name="Rombauts S."/>
            <person name="Salamov A."/>
            <person name="Schein J."/>
            <person name="Sterck L."/>
            <person name="Aerts A."/>
            <person name="Bhalerao R.R."/>
            <person name="Bhalerao R.P."/>
            <person name="Blaudez D."/>
            <person name="Boerjan W."/>
            <person name="Brun A."/>
            <person name="Brunner A."/>
            <person name="Busov V."/>
            <person name="Campbell M."/>
            <person name="Carlson J."/>
            <person name="Chalot M."/>
            <person name="Chapman J."/>
            <person name="Chen G.-L."/>
            <person name="Cooper D."/>
            <person name="Coutinho P.M."/>
            <person name="Couturier J."/>
            <person name="Covert S."/>
            <person name="Cronk Q."/>
            <person name="Cunningham R."/>
            <person name="Davis J."/>
            <person name="Degroeve S."/>
            <person name="Dejardin A."/>
            <person name="dePamphilis C.W."/>
            <person name="Detter J."/>
            <person name="Dirks B."/>
            <person name="Dubchak I."/>
            <person name="Duplessis S."/>
            <person name="Ehlting J."/>
            <person name="Ellis B."/>
            <person name="Gendler K."/>
            <person name="Goodstein D."/>
            <person name="Gribskov M."/>
            <person name="Grimwood J."/>
            <person name="Groover A."/>
            <person name="Gunter L."/>
            <person name="Hamberger B."/>
            <person name="Heinze B."/>
            <person name="Helariutta Y."/>
            <person name="Henrissat B."/>
            <person name="Holligan D."/>
            <person name="Holt R."/>
            <person name="Huang W."/>
            <person name="Islam-Faridi N."/>
            <person name="Jones S."/>
            <person name="Jones-Rhoades M."/>
            <person name="Jorgensen R."/>
            <person name="Joshi C."/>
            <person name="Kangasjaervi J."/>
            <person name="Karlsson J."/>
            <person name="Kelleher C."/>
            <person name="Kirkpatrick R."/>
            <person name="Kirst M."/>
            <person name="Kohler A."/>
            <person name="Kalluri U."/>
            <person name="Larimer F."/>
            <person name="Leebens-Mack J."/>
            <person name="Leple J.-C."/>
            <person name="Locascio P."/>
            <person name="Lou Y."/>
            <person name="Lucas S."/>
            <person name="Martin F."/>
            <person name="Montanini B."/>
            <person name="Napoli C."/>
            <person name="Nelson D.R."/>
            <person name="Nelson C."/>
            <person name="Nieminen K."/>
            <person name="Nilsson O."/>
            <person name="Pereda V."/>
            <person name="Peter G."/>
            <person name="Philippe R."/>
            <person name="Pilate G."/>
            <person name="Poliakov A."/>
            <person name="Razumovskaya J."/>
            <person name="Richardson P."/>
            <person name="Rinaldi C."/>
            <person name="Ritland K."/>
            <person name="Rouze P."/>
            <person name="Ryaboy D."/>
            <person name="Schmutz J."/>
            <person name="Schrader J."/>
            <person name="Segerman B."/>
            <person name="Shin H."/>
            <person name="Siddiqui A."/>
            <person name="Sterky F."/>
            <person name="Terry A."/>
            <person name="Tsai C.-J."/>
            <person name="Uberbacher E."/>
            <person name="Unneberg P."/>
            <person name="Vahala J."/>
            <person name="Wall K."/>
            <person name="Wessler S."/>
            <person name="Yang G."/>
            <person name="Yin T."/>
            <person name="Douglas C."/>
            <person name="Marra M."/>
            <person name="Sandberg G."/>
            <person name="Van de Peer Y."/>
            <person name="Rokhsar D.S."/>
        </authorList>
    </citation>
    <scope>NUCLEOTIDE SEQUENCE [LARGE SCALE GENOMIC DNA]</scope>
    <source>
        <strain>cv. Nisqually</strain>
    </source>
</reference>
<proteinExistence type="evidence at protein level"/>
<protein>
    <recommendedName>
        <fullName evidence="5">Xyloglucan O-acetyltransferase 3</fullName>
        <shortName evidence="5">PtrXGOAT3</shortName>
        <ecNumber evidence="4">2.3.1.-</ecNumber>
    </recommendedName>
</protein>
<feature type="chain" id="PRO_5024196589" description="Xyloglucan O-acetyltransferase 3">
    <location>
        <begin position="1"/>
        <end position="397"/>
    </location>
</feature>
<feature type="topological domain" description="Cytoplasmic" evidence="6">
    <location>
        <begin position="1"/>
        <end position="3"/>
    </location>
</feature>
<feature type="transmembrane region" description="Helical; Signal-anchor for type II membrane protein" evidence="2">
    <location>
        <begin position="4"/>
        <end position="24"/>
    </location>
</feature>
<feature type="topological domain" description="Lumenal" evidence="6">
    <location>
        <begin position="25"/>
        <end position="397"/>
    </location>
</feature>
<feature type="short sequence motif" description="GDS motif" evidence="7">
    <location>
        <begin position="121"/>
        <end position="123"/>
    </location>
</feature>
<feature type="short sequence motif" description="DXXH motif" evidence="7">
    <location>
        <begin position="365"/>
        <end position="368"/>
    </location>
</feature>
<feature type="active site" description="Nucleophile" evidence="1">
    <location>
        <position position="123"/>
    </location>
</feature>
<feature type="active site" description="Proton donor" evidence="1">
    <location>
        <position position="365"/>
    </location>
</feature>
<feature type="active site" description="Proton acceptor" evidence="1">
    <location>
        <position position="368"/>
    </location>
</feature>
<feature type="glycosylation site" description="N-linked (GlcNAc...) asparagine" evidence="3">
    <location>
        <position position="66"/>
    </location>
</feature>
<feature type="glycosylation site" description="N-linked (GlcNAc...) asparagine" evidence="3">
    <location>
        <position position="162"/>
    </location>
</feature>
<feature type="glycosylation site" description="N-linked (GlcNAc...) asparagine" evidence="3">
    <location>
        <position position="182"/>
    </location>
</feature>
<feature type="glycosylation site" description="N-linked (GlcNAc...) asparagine" evidence="3">
    <location>
        <position position="294"/>
    </location>
</feature>
<feature type="disulfide bond" evidence="1">
    <location>
        <begin position="48"/>
        <end position="98"/>
    </location>
</feature>
<feature type="disulfide bond" evidence="1">
    <location>
        <begin position="69"/>
        <end position="134"/>
    </location>
</feature>
<feature type="disulfide bond" evidence="1">
    <location>
        <begin position="78"/>
        <end position="370"/>
    </location>
</feature>
<feature type="disulfide bond" evidence="1">
    <location>
        <begin position="293"/>
        <end position="366"/>
    </location>
</feature>
<keyword id="KW-1015">Disulfide bond</keyword>
<keyword id="KW-0325">Glycoprotein</keyword>
<keyword id="KW-0333">Golgi apparatus</keyword>
<keyword id="KW-0472">Membrane</keyword>
<keyword id="KW-1185">Reference proteome</keyword>
<keyword id="KW-0735">Signal-anchor</keyword>
<keyword id="KW-0808">Transferase</keyword>
<keyword id="KW-0812">Transmembrane</keyword>
<keyword id="KW-1133">Transmembrane helix</keyword>
<organism>
    <name type="scientific">Populus trichocarpa</name>
    <name type="common">Western balsam poplar</name>
    <name type="synonym">Populus balsamifera subsp. trichocarpa</name>
    <dbReference type="NCBI Taxonomy" id="3694"/>
    <lineage>
        <taxon>Eukaryota</taxon>
        <taxon>Viridiplantae</taxon>
        <taxon>Streptophyta</taxon>
        <taxon>Embryophyta</taxon>
        <taxon>Tracheophyta</taxon>
        <taxon>Spermatophyta</taxon>
        <taxon>Magnoliopsida</taxon>
        <taxon>eudicotyledons</taxon>
        <taxon>Gunneridae</taxon>
        <taxon>Pentapetalae</taxon>
        <taxon>rosids</taxon>
        <taxon>fabids</taxon>
        <taxon>Malpighiales</taxon>
        <taxon>Salicaceae</taxon>
        <taxon>Saliceae</taxon>
        <taxon>Populus</taxon>
    </lineage>
</organism>
<name>XGAT3_POPTR</name>
<accession>A0A2K1YKA4</accession>
<accession>A0A346FH64</accession>
<evidence type="ECO:0000250" key="1">
    <source>
        <dbReference type="UniProtKB" id="Q9LY46"/>
    </source>
</evidence>
<evidence type="ECO:0000255" key="2"/>
<evidence type="ECO:0000255" key="3">
    <source>
        <dbReference type="PROSITE-ProRule" id="PRU00498"/>
    </source>
</evidence>
<evidence type="ECO:0000269" key="4">
    <source>
    </source>
</evidence>
<evidence type="ECO:0000303" key="5">
    <source>
    </source>
</evidence>
<evidence type="ECO:0000305" key="6"/>
<evidence type="ECO:0000305" key="7">
    <source>
    </source>
</evidence>
<evidence type="ECO:0000312" key="8">
    <source>
        <dbReference type="EMBL" id="PNT13461.2"/>
    </source>
</evidence>